<organism>
    <name type="scientific">Mantophasma kudubergense</name>
    <name type="common">Gladiator</name>
    <name type="synonym">Heel-walker</name>
    <dbReference type="NCBI Taxonomy" id="1037657"/>
    <lineage>
        <taxon>Eukaryota</taxon>
        <taxon>Metazoa</taxon>
        <taxon>Ecdysozoa</taxon>
        <taxon>Arthropoda</taxon>
        <taxon>Hexapoda</taxon>
        <taxon>Insecta</taxon>
        <taxon>Pterygota</taxon>
        <taxon>Neoptera</taxon>
        <taxon>Polyneoptera</taxon>
        <taxon>Mantophasmatodea</taxon>
        <taxon>Mantophasmatidae</taxon>
        <taxon>Mantophasma</taxon>
    </lineage>
</organism>
<evidence type="ECO:0000250" key="1">
    <source>
        <dbReference type="UniProtKB" id="P34405"/>
    </source>
</evidence>
<evidence type="ECO:0000255" key="2"/>
<evidence type="ECO:0000269" key="3">
    <source>
    </source>
</evidence>
<evidence type="ECO:0000303" key="4">
    <source>
    </source>
</evidence>
<evidence type="ECO:0000305" key="5"/>
<evidence type="ECO:0000305" key="6">
    <source>
    </source>
</evidence>
<proteinExistence type="evidence at protein level"/>
<sequence length="11" mass="1165">GRGGSSNYVRL</sequence>
<feature type="peptide" id="PRO_0000420779" description="Extended FMRFamide-9" evidence="3">
    <location>
        <begin position="1"/>
        <end position="11"/>
    </location>
</feature>
<feature type="modified residue" description="Leucine amide" evidence="3">
    <location>
        <position position="11"/>
    </location>
</feature>
<feature type="unsure residue" description="L or I" evidence="3">
    <location>
        <position position="11"/>
    </location>
</feature>
<accession>B0M3D3</accession>
<dbReference type="GO" id="GO:0005576">
    <property type="term" value="C:extracellular region"/>
    <property type="evidence" value="ECO:0007669"/>
    <property type="project" value="UniProtKB-SubCell"/>
</dbReference>
<dbReference type="GO" id="GO:0007218">
    <property type="term" value="P:neuropeptide signaling pathway"/>
    <property type="evidence" value="ECO:0007669"/>
    <property type="project" value="UniProtKB-KW"/>
</dbReference>
<name>FAR9_MANKU</name>
<comment type="function">
    <text evidence="1">FMRFamides and FMRFamide-like peptides are neuropeptides.</text>
</comment>
<comment type="subcellular location">
    <subcellularLocation>
        <location evidence="6">Secreted</location>
    </subcellularLocation>
</comment>
<comment type="similarity">
    <text evidence="2">Belongs to the FARP (FMRF amide related peptide) family.</text>
</comment>
<protein>
    <recommendedName>
        <fullName evidence="4">Extended FMRFamide-9</fullName>
        <shortName evidence="4">FMRFa-9</shortName>
    </recommendedName>
</protein>
<keyword id="KW-0027">Amidation</keyword>
<keyword id="KW-0903">Direct protein sequencing</keyword>
<keyword id="KW-0527">Neuropeptide</keyword>
<keyword id="KW-0964">Secreted</keyword>
<reference evidence="5" key="1">
    <citation type="journal article" date="2012" name="Syst. Biol.">
        <title>Peptidomics-based phylogeny and biogeography of Mantophasmatodea (Hexapoda).</title>
        <authorList>
            <person name="Predel R."/>
            <person name="Neupert S."/>
            <person name="Huetteroth W."/>
            <person name="Kahnt J."/>
            <person name="Waidelich D."/>
            <person name="Roth S."/>
        </authorList>
    </citation>
    <scope>PROTEIN SEQUENCE</scope>
    <scope>AMIDATION AT LEU-11</scope>
    <source>
        <tissue evidence="3">Thoracic perisympathetic organs</tissue>
    </source>
</reference>